<comment type="function">
    <text>May function in the formation of membrane-bound replication complexes or in the assembly of the virus.</text>
</comment>
<comment type="subcellular location">
    <subcellularLocation>
        <location evidence="2">Host membrane</location>
        <topology evidence="2">Single-pass membrane protein</topology>
    </subcellularLocation>
</comment>
<comment type="similarity">
    <text evidence="2">Belongs to the coronaviruses ns7/ns7a protein family.</text>
</comment>
<organism>
    <name type="scientific">Feline enteric coronavirus (strain 79-1683)</name>
    <name type="common">FeCoV</name>
    <name type="synonym">FECV</name>
    <dbReference type="NCBI Taxonomy" id="33733"/>
    <lineage>
        <taxon>Viruses</taxon>
        <taxon>Riboviria</taxon>
        <taxon>Orthornavirae</taxon>
        <taxon>Pisuviricota</taxon>
        <taxon>Pisoniviricetes</taxon>
        <taxon>Nidovirales</taxon>
        <taxon>Cornidovirineae</taxon>
        <taxon>Coronaviridae</taxon>
        <taxon>Orthocoronavirinae</taxon>
        <taxon>Alphacoronavirus</taxon>
        <taxon>Tegacovirus</taxon>
        <taxon>Alphacoronavirus 1</taxon>
    </lineage>
</organism>
<sequence length="101" mass="11246">MLVFLHAVLVTALILLLIGRIQLLERLLLSHLLNLTTVSNVLGVPDSSLRVNCLQLLKPDCLDFNILHKVLAETRLLVVVLRVIFLVLLGFSCYTLLGALF</sequence>
<proteinExistence type="inferred from homology"/>
<dbReference type="EMBL" id="X66718">
    <property type="protein sequence ID" value="CAA47249.1"/>
    <property type="molecule type" value="Genomic_RNA"/>
</dbReference>
<dbReference type="PIR" id="D44056">
    <property type="entry name" value="D44056"/>
</dbReference>
<dbReference type="SMR" id="P33465"/>
<dbReference type="GO" id="GO:0033644">
    <property type="term" value="C:host cell membrane"/>
    <property type="evidence" value="ECO:0007669"/>
    <property type="project" value="UniProtKB-SubCell"/>
</dbReference>
<dbReference type="GO" id="GO:0016020">
    <property type="term" value="C:membrane"/>
    <property type="evidence" value="ECO:0007669"/>
    <property type="project" value="UniProtKB-KW"/>
</dbReference>
<dbReference type="InterPro" id="IPR003449">
    <property type="entry name" value="Corona_7"/>
</dbReference>
<dbReference type="Pfam" id="PF02398">
    <property type="entry name" value="Corona_7"/>
    <property type="match status" value="1"/>
</dbReference>
<name>NS7_CVFE3</name>
<accession>P33465</accession>
<organismHost>
    <name type="scientific">Felidae</name>
    <name type="common">cat family</name>
    <dbReference type="NCBI Taxonomy" id="9681"/>
</organismHost>
<reference key="1">
    <citation type="journal article" date="1992" name="Virology">
        <title>Genomic organization and expression of the 3' end of the canine and feline enteric coronaviruses.</title>
        <authorList>
            <person name="Vennema H."/>
            <person name="Rossen J.W.A."/>
            <person name="Wesseling J."/>
            <person name="Horzinek M.C."/>
            <person name="Rottier P.J.M."/>
        </authorList>
    </citation>
    <scope>NUCLEOTIDE SEQUENCE [GENOMIC RNA]</scope>
</reference>
<gene>
    <name type="ORF">7a</name>
</gene>
<feature type="signal peptide" evidence="1">
    <location>
        <begin position="1"/>
        <end position="23"/>
    </location>
</feature>
<feature type="chain" id="PRO_0000106097" description="Non-structural 7a protein">
    <location>
        <begin position="24"/>
        <end position="101"/>
    </location>
</feature>
<feature type="transmembrane region" description="Helical" evidence="1">
    <location>
        <begin position="76"/>
        <end position="96"/>
    </location>
</feature>
<protein>
    <recommendedName>
        <fullName>Non-structural 7a protein</fullName>
        <shortName>ns7a</shortName>
    </recommendedName>
    <alternativeName>
        <fullName>11 kDa protein</fullName>
    </alternativeName>
    <alternativeName>
        <fullName>Accessory protein 7a</fullName>
    </alternativeName>
</protein>
<evidence type="ECO:0000255" key="1"/>
<evidence type="ECO:0000305" key="2"/>
<keyword id="KW-1043">Host membrane</keyword>
<keyword id="KW-0472">Membrane</keyword>
<keyword id="KW-0732">Signal</keyword>
<keyword id="KW-0812">Transmembrane</keyword>
<keyword id="KW-1133">Transmembrane helix</keyword>